<accession>A1RPP5</accession>
<evidence type="ECO:0000255" key="1">
    <source>
        <dbReference type="HAMAP-Rule" id="MF_00048"/>
    </source>
</evidence>
<protein>
    <recommendedName>
        <fullName evidence="1">UPF0102 protein Sputw3181_3835</fullName>
    </recommendedName>
</protein>
<organism>
    <name type="scientific">Shewanella sp. (strain W3-18-1)</name>
    <dbReference type="NCBI Taxonomy" id="351745"/>
    <lineage>
        <taxon>Bacteria</taxon>
        <taxon>Pseudomonadati</taxon>
        <taxon>Pseudomonadota</taxon>
        <taxon>Gammaproteobacteria</taxon>
        <taxon>Alteromonadales</taxon>
        <taxon>Shewanellaceae</taxon>
        <taxon>Shewanella</taxon>
    </lineage>
</organism>
<sequence length="108" mass="12396">MILGQAAETLAQSHLEQQGLTFVERNVRYPFGEIDLVMRHKNHWVFVEVKYRSATQYGGALQAVSKAQIGRIRLAASHYLQIHRLDVPCRFDVVAIEGHQIHWLVDAF</sequence>
<gene>
    <name type="ordered locus">Sputw3181_3835</name>
</gene>
<comment type="similarity">
    <text evidence="1">Belongs to the UPF0102 family.</text>
</comment>
<proteinExistence type="inferred from homology"/>
<reference key="1">
    <citation type="submission" date="2006-12" db="EMBL/GenBank/DDBJ databases">
        <title>Complete sequence of Shewanella sp. W3-18-1.</title>
        <authorList>
            <consortium name="US DOE Joint Genome Institute"/>
            <person name="Copeland A."/>
            <person name="Lucas S."/>
            <person name="Lapidus A."/>
            <person name="Barry K."/>
            <person name="Detter J.C."/>
            <person name="Glavina del Rio T."/>
            <person name="Hammon N."/>
            <person name="Israni S."/>
            <person name="Dalin E."/>
            <person name="Tice H."/>
            <person name="Pitluck S."/>
            <person name="Chain P."/>
            <person name="Malfatti S."/>
            <person name="Shin M."/>
            <person name="Vergez L."/>
            <person name="Schmutz J."/>
            <person name="Larimer F."/>
            <person name="Land M."/>
            <person name="Hauser L."/>
            <person name="Kyrpides N."/>
            <person name="Lykidis A."/>
            <person name="Tiedje J."/>
            <person name="Richardson P."/>
        </authorList>
    </citation>
    <scope>NUCLEOTIDE SEQUENCE [LARGE SCALE GENOMIC DNA]</scope>
    <source>
        <strain>W3-18-1</strain>
    </source>
</reference>
<feature type="chain" id="PRO_1000009264" description="UPF0102 protein Sputw3181_3835">
    <location>
        <begin position="1"/>
        <end position="108"/>
    </location>
</feature>
<dbReference type="EMBL" id="CP000503">
    <property type="protein sequence ID" value="ABM26640.1"/>
    <property type="molecule type" value="Genomic_DNA"/>
</dbReference>
<dbReference type="RefSeq" id="WP_011791065.1">
    <property type="nucleotide sequence ID" value="NC_008750.1"/>
</dbReference>
<dbReference type="SMR" id="A1RPP5"/>
<dbReference type="KEGG" id="shw:Sputw3181_3835"/>
<dbReference type="HOGENOM" id="CLU_115353_1_0_6"/>
<dbReference type="Proteomes" id="UP000002597">
    <property type="component" value="Chromosome"/>
</dbReference>
<dbReference type="GO" id="GO:0003676">
    <property type="term" value="F:nucleic acid binding"/>
    <property type="evidence" value="ECO:0007669"/>
    <property type="project" value="InterPro"/>
</dbReference>
<dbReference type="CDD" id="cd20736">
    <property type="entry name" value="PoNe_Nuclease"/>
    <property type="match status" value="1"/>
</dbReference>
<dbReference type="Gene3D" id="3.40.1350.10">
    <property type="match status" value="1"/>
</dbReference>
<dbReference type="HAMAP" id="MF_00048">
    <property type="entry name" value="UPF0102"/>
    <property type="match status" value="1"/>
</dbReference>
<dbReference type="InterPro" id="IPR011335">
    <property type="entry name" value="Restrct_endonuc-II-like"/>
</dbReference>
<dbReference type="InterPro" id="IPR011856">
    <property type="entry name" value="tRNA_endonuc-like_dom_sf"/>
</dbReference>
<dbReference type="InterPro" id="IPR003509">
    <property type="entry name" value="UPF0102_YraN-like"/>
</dbReference>
<dbReference type="NCBIfam" id="NF009150">
    <property type="entry name" value="PRK12497.1-3"/>
    <property type="match status" value="1"/>
</dbReference>
<dbReference type="NCBIfam" id="TIGR00252">
    <property type="entry name" value="YraN family protein"/>
    <property type="match status" value="1"/>
</dbReference>
<dbReference type="PANTHER" id="PTHR34039">
    <property type="entry name" value="UPF0102 PROTEIN YRAN"/>
    <property type="match status" value="1"/>
</dbReference>
<dbReference type="PANTHER" id="PTHR34039:SF1">
    <property type="entry name" value="UPF0102 PROTEIN YRAN"/>
    <property type="match status" value="1"/>
</dbReference>
<dbReference type="Pfam" id="PF02021">
    <property type="entry name" value="UPF0102"/>
    <property type="match status" value="1"/>
</dbReference>
<dbReference type="SUPFAM" id="SSF52980">
    <property type="entry name" value="Restriction endonuclease-like"/>
    <property type="match status" value="1"/>
</dbReference>
<name>Y3835_SHESW</name>